<comment type="function">
    <text evidence="1">RNaseP catalyzes the removal of the 5'-leader sequence from pre-tRNA to produce the mature 5'-terminus. It can also cleave other RNA substrates such as 4.5S RNA. The protein component plays an auxiliary but essential role in vivo by binding to the 5'-leader sequence and broadening the substrate specificity of the ribozyme.</text>
</comment>
<comment type="catalytic activity">
    <reaction evidence="1">
        <text>Endonucleolytic cleavage of RNA, removing 5'-extranucleotides from tRNA precursor.</text>
        <dbReference type="EC" id="3.1.26.5"/>
    </reaction>
</comment>
<comment type="subunit">
    <text evidence="1">Consists of a catalytic RNA component (M1 or rnpB) and a protein subunit.</text>
</comment>
<comment type="similarity">
    <text evidence="1">Belongs to the RnpA family.</text>
</comment>
<proteinExistence type="inferred from homology"/>
<dbReference type="EC" id="3.1.26.5" evidence="1"/>
<dbReference type="EMBL" id="AE001437">
    <property type="protein sequence ID" value="AAK81658.1"/>
    <property type="molecule type" value="Genomic_DNA"/>
</dbReference>
<dbReference type="PIR" id="G97358">
    <property type="entry name" value="G97358"/>
</dbReference>
<dbReference type="RefSeq" id="NP_350318.1">
    <property type="nucleotide sequence ID" value="NC_003030.1"/>
</dbReference>
<dbReference type="RefSeq" id="WP_010966998.1">
    <property type="nucleotide sequence ID" value="NC_003030.1"/>
</dbReference>
<dbReference type="SMR" id="Q97CV8"/>
<dbReference type="STRING" id="272562.CA_C3738"/>
<dbReference type="GeneID" id="45000234"/>
<dbReference type="KEGG" id="cac:CA_C3738"/>
<dbReference type="PATRIC" id="fig|272562.8.peg.3928"/>
<dbReference type="eggNOG" id="COG0594">
    <property type="taxonomic scope" value="Bacteria"/>
</dbReference>
<dbReference type="HOGENOM" id="CLU_117179_9_3_9"/>
<dbReference type="OrthoDB" id="9810867at2"/>
<dbReference type="Proteomes" id="UP000000814">
    <property type="component" value="Chromosome"/>
</dbReference>
<dbReference type="GO" id="GO:0030677">
    <property type="term" value="C:ribonuclease P complex"/>
    <property type="evidence" value="ECO:0007669"/>
    <property type="project" value="TreeGrafter"/>
</dbReference>
<dbReference type="GO" id="GO:0042781">
    <property type="term" value="F:3'-tRNA processing endoribonuclease activity"/>
    <property type="evidence" value="ECO:0007669"/>
    <property type="project" value="TreeGrafter"/>
</dbReference>
<dbReference type="GO" id="GO:0004526">
    <property type="term" value="F:ribonuclease P activity"/>
    <property type="evidence" value="ECO:0007669"/>
    <property type="project" value="UniProtKB-UniRule"/>
</dbReference>
<dbReference type="GO" id="GO:0000049">
    <property type="term" value="F:tRNA binding"/>
    <property type="evidence" value="ECO:0007669"/>
    <property type="project" value="UniProtKB-UniRule"/>
</dbReference>
<dbReference type="GO" id="GO:0001682">
    <property type="term" value="P:tRNA 5'-leader removal"/>
    <property type="evidence" value="ECO:0007669"/>
    <property type="project" value="UniProtKB-UniRule"/>
</dbReference>
<dbReference type="Gene3D" id="3.30.230.10">
    <property type="match status" value="1"/>
</dbReference>
<dbReference type="HAMAP" id="MF_00227">
    <property type="entry name" value="RNase_P"/>
    <property type="match status" value="1"/>
</dbReference>
<dbReference type="InterPro" id="IPR020568">
    <property type="entry name" value="Ribosomal_Su5_D2-typ_SF"/>
</dbReference>
<dbReference type="InterPro" id="IPR014721">
    <property type="entry name" value="Ribsml_uS5_D2-typ_fold_subgr"/>
</dbReference>
<dbReference type="InterPro" id="IPR000100">
    <property type="entry name" value="RNase_P"/>
</dbReference>
<dbReference type="NCBIfam" id="TIGR00188">
    <property type="entry name" value="rnpA"/>
    <property type="match status" value="1"/>
</dbReference>
<dbReference type="PANTHER" id="PTHR33992">
    <property type="entry name" value="RIBONUCLEASE P PROTEIN COMPONENT"/>
    <property type="match status" value="1"/>
</dbReference>
<dbReference type="PANTHER" id="PTHR33992:SF1">
    <property type="entry name" value="RIBONUCLEASE P PROTEIN COMPONENT"/>
    <property type="match status" value="1"/>
</dbReference>
<dbReference type="Pfam" id="PF00825">
    <property type="entry name" value="Ribonuclease_P"/>
    <property type="match status" value="1"/>
</dbReference>
<dbReference type="SUPFAM" id="SSF54211">
    <property type="entry name" value="Ribosomal protein S5 domain 2-like"/>
    <property type="match status" value="1"/>
</dbReference>
<keyword id="KW-0255">Endonuclease</keyword>
<keyword id="KW-0378">Hydrolase</keyword>
<keyword id="KW-0540">Nuclease</keyword>
<keyword id="KW-1185">Reference proteome</keyword>
<keyword id="KW-0694">RNA-binding</keyword>
<keyword id="KW-0819">tRNA processing</keyword>
<sequence length="119" mass="13889">MKENRIRKNAEFRRVYRKGKSFSNRLLVLYVYKNYILKDINRIGISVSKKVGKSVVRSRVKRLIGESYRLNSSNLKKGHDFVIIARTACNGKRYSDIEDSIKNLFNKAGLVIYDEKNIT</sequence>
<reference key="1">
    <citation type="journal article" date="2001" name="J. Bacteriol.">
        <title>Genome sequence and comparative analysis of the solvent-producing bacterium Clostridium acetobutylicum.</title>
        <authorList>
            <person name="Noelling J."/>
            <person name="Breton G."/>
            <person name="Omelchenko M.V."/>
            <person name="Makarova K.S."/>
            <person name="Zeng Q."/>
            <person name="Gibson R."/>
            <person name="Lee H.M."/>
            <person name="Dubois J."/>
            <person name="Qiu D."/>
            <person name="Hitti J."/>
            <person name="Wolf Y.I."/>
            <person name="Tatusov R.L."/>
            <person name="Sabathe F."/>
            <person name="Doucette-Stamm L.A."/>
            <person name="Soucaille P."/>
            <person name="Daly M.J."/>
            <person name="Bennett G.N."/>
            <person name="Koonin E.V."/>
            <person name="Smith D.R."/>
        </authorList>
    </citation>
    <scope>NUCLEOTIDE SEQUENCE [LARGE SCALE GENOMIC DNA]</scope>
    <source>
        <strain>ATCC 824 / DSM 792 / JCM 1419 / IAM 19013 / LMG 5710 / NBRC 13948 / NRRL B-527 / VKM B-1787 / 2291 / W</strain>
    </source>
</reference>
<feature type="chain" id="PRO_0000198450" description="Ribonuclease P protein component">
    <location>
        <begin position="1"/>
        <end position="119"/>
    </location>
</feature>
<protein>
    <recommendedName>
        <fullName evidence="1">Ribonuclease P protein component</fullName>
        <shortName evidence="1">RNase P protein</shortName>
        <shortName evidence="1">RNaseP protein</shortName>
        <ecNumber evidence="1">3.1.26.5</ecNumber>
    </recommendedName>
    <alternativeName>
        <fullName evidence="1">Protein C5</fullName>
    </alternativeName>
</protein>
<evidence type="ECO:0000255" key="1">
    <source>
        <dbReference type="HAMAP-Rule" id="MF_00227"/>
    </source>
</evidence>
<name>RNPA_CLOAB</name>
<accession>Q97CV8</accession>
<organism>
    <name type="scientific">Clostridium acetobutylicum (strain ATCC 824 / DSM 792 / JCM 1419 / IAM 19013 / LMG 5710 / NBRC 13948 / NRRL B-527 / VKM B-1787 / 2291 / W)</name>
    <dbReference type="NCBI Taxonomy" id="272562"/>
    <lineage>
        <taxon>Bacteria</taxon>
        <taxon>Bacillati</taxon>
        <taxon>Bacillota</taxon>
        <taxon>Clostridia</taxon>
        <taxon>Eubacteriales</taxon>
        <taxon>Clostridiaceae</taxon>
        <taxon>Clostridium</taxon>
    </lineage>
</organism>
<gene>
    <name evidence="1" type="primary">rnpA</name>
    <name type="ordered locus">CA_C3738</name>
</gene>